<name>SYI_SALCH</name>
<organism>
    <name type="scientific">Salmonella choleraesuis (strain SC-B67)</name>
    <dbReference type="NCBI Taxonomy" id="321314"/>
    <lineage>
        <taxon>Bacteria</taxon>
        <taxon>Pseudomonadati</taxon>
        <taxon>Pseudomonadota</taxon>
        <taxon>Gammaproteobacteria</taxon>
        <taxon>Enterobacterales</taxon>
        <taxon>Enterobacteriaceae</taxon>
        <taxon>Salmonella</taxon>
    </lineage>
</organism>
<proteinExistence type="inferred from homology"/>
<protein>
    <recommendedName>
        <fullName evidence="1">Isoleucine--tRNA ligase</fullName>
        <ecNumber evidence="1">6.1.1.5</ecNumber>
    </recommendedName>
    <alternativeName>
        <fullName evidence="1">Isoleucyl-tRNA synthetase</fullName>
        <shortName evidence="1">IleRS</shortName>
    </alternativeName>
</protein>
<gene>
    <name evidence="1" type="primary">ileS</name>
    <name type="ordered locus">SCH_0040</name>
</gene>
<comment type="function">
    <text evidence="1">Catalyzes the attachment of isoleucine to tRNA(Ile). As IleRS can inadvertently accommodate and process structurally similar amino acids such as valine, to avoid such errors it has two additional distinct tRNA(Ile)-dependent editing activities. One activity is designated as 'pretransfer' editing and involves the hydrolysis of activated Val-AMP. The other activity is designated 'posttransfer' editing and involves deacylation of mischarged Val-tRNA(Ile).</text>
</comment>
<comment type="catalytic activity">
    <reaction evidence="1">
        <text>tRNA(Ile) + L-isoleucine + ATP = L-isoleucyl-tRNA(Ile) + AMP + diphosphate</text>
        <dbReference type="Rhea" id="RHEA:11060"/>
        <dbReference type="Rhea" id="RHEA-COMP:9666"/>
        <dbReference type="Rhea" id="RHEA-COMP:9695"/>
        <dbReference type="ChEBI" id="CHEBI:30616"/>
        <dbReference type="ChEBI" id="CHEBI:33019"/>
        <dbReference type="ChEBI" id="CHEBI:58045"/>
        <dbReference type="ChEBI" id="CHEBI:78442"/>
        <dbReference type="ChEBI" id="CHEBI:78528"/>
        <dbReference type="ChEBI" id="CHEBI:456215"/>
        <dbReference type="EC" id="6.1.1.5"/>
    </reaction>
</comment>
<comment type="cofactor">
    <cofactor evidence="1">
        <name>Zn(2+)</name>
        <dbReference type="ChEBI" id="CHEBI:29105"/>
    </cofactor>
    <text evidence="1">Binds 1 zinc ion per subunit.</text>
</comment>
<comment type="subunit">
    <text evidence="1">Monomer.</text>
</comment>
<comment type="subcellular location">
    <subcellularLocation>
        <location evidence="1">Cytoplasm</location>
    </subcellularLocation>
</comment>
<comment type="domain">
    <text evidence="1">IleRS has two distinct active sites: one for aminoacylation and one for editing. The misactivated valine is translocated from the active site to the editing site, which sterically excludes the correctly activated isoleucine. The single editing site contains two valyl binding pockets, one specific for each substrate (Val-AMP or Val-tRNA(Ile)).</text>
</comment>
<comment type="similarity">
    <text evidence="1">Belongs to the class-I aminoacyl-tRNA synthetase family. IleS type 1 subfamily.</text>
</comment>
<comment type="sequence caution" evidence="2">
    <conflict type="erroneous initiation">
        <sequence resource="EMBL-CDS" id="AAX63946"/>
    </conflict>
</comment>
<evidence type="ECO:0000255" key="1">
    <source>
        <dbReference type="HAMAP-Rule" id="MF_02002"/>
    </source>
</evidence>
<evidence type="ECO:0000305" key="2"/>
<reference key="1">
    <citation type="journal article" date="2005" name="Nucleic Acids Res.">
        <title>The genome sequence of Salmonella enterica serovar Choleraesuis, a highly invasive and resistant zoonotic pathogen.</title>
        <authorList>
            <person name="Chiu C.-H."/>
            <person name="Tang P."/>
            <person name="Chu C."/>
            <person name="Hu S."/>
            <person name="Bao Q."/>
            <person name="Yu J."/>
            <person name="Chou Y.-Y."/>
            <person name="Wang H.-S."/>
            <person name="Lee Y.-S."/>
        </authorList>
    </citation>
    <scope>NUCLEOTIDE SEQUENCE [LARGE SCALE GENOMIC DNA]</scope>
    <source>
        <strain>SC-B67</strain>
    </source>
</reference>
<feature type="chain" id="PRO_0000098455" description="Isoleucine--tRNA ligase">
    <location>
        <begin position="1"/>
        <end position="944"/>
    </location>
</feature>
<feature type="short sequence motif" description="'HIGH' region">
    <location>
        <begin position="58"/>
        <end position="68"/>
    </location>
</feature>
<feature type="short sequence motif" description="'KMSKS' region">
    <location>
        <begin position="604"/>
        <end position="608"/>
    </location>
</feature>
<feature type="binding site" evidence="1">
    <location>
        <position position="563"/>
    </location>
    <ligand>
        <name>L-isoleucyl-5'-AMP</name>
        <dbReference type="ChEBI" id="CHEBI:178002"/>
    </ligand>
</feature>
<feature type="binding site" evidence="1">
    <location>
        <position position="607"/>
    </location>
    <ligand>
        <name>ATP</name>
        <dbReference type="ChEBI" id="CHEBI:30616"/>
    </ligand>
</feature>
<feature type="binding site" evidence="1">
    <location>
        <position position="907"/>
    </location>
    <ligand>
        <name>Zn(2+)</name>
        <dbReference type="ChEBI" id="CHEBI:29105"/>
    </ligand>
</feature>
<feature type="binding site" evidence="1">
    <location>
        <position position="910"/>
    </location>
    <ligand>
        <name>Zn(2+)</name>
        <dbReference type="ChEBI" id="CHEBI:29105"/>
    </ligand>
</feature>
<feature type="binding site" evidence="1">
    <location>
        <position position="927"/>
    </location>
    <ligand>
        <name>Zn(2+)</name>
        <dbReference type="ChEBI" id="CHEBI:29105"/>
    </ligand>
</feature>
<feature type="binding site" evidence="1">
    <location>
        <position position="930"/>
    </location>
    <ligand>
        <name>Zn(2+)</name>
        <dbReference type="ChEBI" id="CHEBI:29105"/>
    </ligand>
</feature>
<keyword id="KW-0030">Aminoacyl-tRNA synthetase</keyword>
<keyword id="KW-0067">ATP-binding</keyword>
<keyword id="KW-0963">Cytoplasm</keyword>
<keyword id="KW-0436">Ligase</keyword>
<keyword id="KW-0479">Metal-binding</keyword>
<keyword id="KW-0547">Nucleotide-binding</keyword>
<keyword id="KW-0648">Protein biosynthesis</keyword>
<keyword id="KW-0862">Zinc</keyword>
<dbReference type="EC" id="6.1.1.5" evidence="1"/>
<dbReference type="EMBL" id="AE017220">
    <property type="protein sequence ID" value="AAX63946.1"/>
    <property type="status" value="ALT_INIT"/>
    <property type="molecule type" value="Genomic_DNA"/>
</dbReference>
<dbReference type="RefSeq" id="WP_001674865.1">
    <property type="nucleotide sequence ID" value="NC_006905.1"/>
</dbReference>
<dbReference type="SMR" id="Q57TL5"/>
<dbReference type="KEGG" id="sec:SCH_0040"/>
<dbReference type="HOGENOM" id="CLU_001493_7_1_6"/>
<dbReference type="Proteomes" id="UP000000538">
    <property type="component" value="Chromosome"/>
</dbReference>
<dbReference type="GO" id="GO:0005829">
    <property type="term" value="C:cytosol"/>
    <property type="evidence" value="ECO:0007669"/>
    <property type="project" value="TreeGrafter"/>
</dbReference>
<dbReference type="GO" id="GO:0002161">
    <property type="term" value="F:aminoacyl-tRNA deacylase activity"/>
    <property type="evidence" value="ECO:0007669"/>
    <property type="project" value="InterPro"/>
</dbReference>
<dbReference type="GO" id="GO:0005524">
    <property type="term" value="F:ATP binding"/>
    <property type="evidence" value="ECO:0007669"/>
    <property type="project" value="UniProtKB-UniRule"/>
</dbReference>
<dbReference type="GO" id="GO:0004822">
    <property type="term" value="F:isoleucine-tRNA ligase activity"/>
    <property type="evidence" value="ECO:0007669"/>
    <property type="project" value="UniProtKB-UniRule"/>
</dbReference>
<dbReference type="GO" id="GO:0000049">
    <property type="term" value="F:tRNA binding"/>
    <property type="evidence" value="ECO:0007669"/>
    <property type="project" value="InterPro"/>
</dbReference>
<dbReference type="GO" id="GO:0008270">
    <property type="term" value="F:zinc ion binding"/>
    <property type="evidence" value="ECO:0007669"/>
    <property type="project" value="UniProtKB-UniRule"/>
</dbReference>
<dbReference type="GO" id="GO:0006428">
    <property type="term" value="P:isoleucyl-tRNA aminoacylation"/>
    <property type="evidence" value="ECO:0007669"/>
    <property type="project" value="UniProtKB-UniRule"/>
</dbReference>
<dbReference type="CDD" id="cd07960">
    <property type="entry name" value="Anticodon_Ia_Ile_BEm"/>
    <property type="match status" value="1"/>
</dbReference>
<dbReference type="CDD" id="cd00818">
    <property type="entry name" value="IleRS_core"/>
    <property type="match status" value="1"/>
</dbReference>
<dbReference type="FunFam" id="1.10.730.20:FF:000001">
    <property type="entry name" value="Isoleucine--tRNA ligase"/>
    <property type="match status" value="1"/>
</dbReference>
<dbReference type="FunFam" id="3.40.50.620:FF:000042">
    <property type="entry name" value="Isoleucine--tRNA ligase"/>
    <property type="match status" value="1"/>
</dbReference>
<dbReference type="FunFam" id="3.40.50.620:FF:000048">
    <property type="entry name" value="Isoleucine--tRNA ligase"/>
    <property type="match status" value="1"/>
</dbReference>
<dbReference type="FunFam" id="3.90.740.10:FF:000002">
    <property type="entry name" value="Isoleucine--tRNA ligase"/>
    <property type="match status" value="1"/>
</dbReference>
<dbReference type="Gene3D" id="1.10.730.20">
    <property type="match status" value="1"/>
</dbReference>
<dbReference type="Gene3D" id="3.40.50.620">
    <property type="entry name" value="HUPs"/>
    <property type="match status" value="2"/>
</dbReference>
<dbReference type="Gene3D" id="3.90.740.10">
    <property type="entry name" value="Valyl/Leucyl/Isoleucyl-tRNA synthetase, editing domain"/>
    <property type="match status" value="1"/>
</dbReference>
<dbReference type="HAMAP" id="MF_02002">
    <property type="entry name" value="Ile_tRNA_synth_type1"/>
    <property type="match status" value="1"/>
</dbReference>
<dbReference type="InterPro" id="IPR001412">
    <property type="entry name" value="aa-tRNA-synth_I_CS"/>
</dbReference>
<dbReference type="InterPro" id="IPR002300">
    <property type="entry name" value="aa-tRNA-synth_Ia"/>
</dbReference>
<dbReference type="InterPro" id="IPR033708">
    <property type="entry name" value="Anticodon_Ile_BEm"/>
</dbReference>
<dbReference type="InterPro" id="IPR002301">
    <property type="entry name" value="Ile-tRNA-ligase"/>
</dbReference>
<dbReference type="InterPro" id="IPR023585">
    <property type="entry name" value="Ile-tRNA-ligase_type1"/>
</dbReference>
<dbReference type="InterPro" id="IPR050081">
    <property type="entry name" value="Ile-tRNA_ligase"/>
</dbReference>
<dbReference type="InterPro" id="IPR013155">
    <property type="entry name" value="M/V/L/I-tRNA-synth_anticd-bd"/>
</dbReference>
<dbReference type="InterPro" id="IPR014729">
    <property type="entry name" value="Rossmann-like_a/b/a_fold"/>
</dbReference>
<dbReference type="InterPro" id="IPR009080">
    <property type="entry name" value="tRNAsynth_Ia_anticodon-bd"/>
</dbReference>
<dbReference type="InterPro" id="IPR009008">
    <property type="entry name" value="Val/Leu/Ile-tRNA-synth_edit"/>
</dbReference>
<dbReference type="InterPro" id="IPR010663">
    <property type="entry name" value="Znf_FPG/IleRS"/>
</dbReference>
<dbReference type="NCBIfam" id="TIGR00392">
    <property type="entry name" value="ileS"/>
    <property type="match status" value="1"/>
</dbReference>
<dbReference type="PANTHER" id="PTHR42765:SF1">
    <property type="entry name" value="ISOLEUCINE--TRNA LIGASE, MITOCHONDRIAL"/>
    <property type="match status" value="1"/>
</dbReference>
<dbReference type="PANTHER" id="PTHR42765">
    <property type="entry name" value="SOLEUCYL-TRNA SYNTHETASE"/>
    <property type="match status" value="1"/>
</dbReference>
<dbReference type="Pfam" id="PF08264">
    <property type="entry name" value="Anticodon_1"/>
    <property type="match status" value="1"/>
</dbReference>
<dbReference type="Pfam" id="PF00133">
    <property type="entry name" value="tRNA-synt_1"/>
    <property type="match status" value="1"/>
</dbReference>
<dbReference type="Pfam" id="PF06827">
    <property type="entry name" value="zf-FPG_IleRS"/>
    <property type="match status" value="1"/>
</dbReference>
<dbReference type="PRINTS" id="PR00984">
    <property type="entry name" value="TRNASYNTHILE"/>
</dbReference>
<dbReference type="SUPFAM" id="SSF47323">
    <property type="entry name" value="Anticodon-binding domain of a subclass of class I aminoacyl-tRNA synthetases"/>
    <property type="match status" value="1"/>
</dbReference>
<dbReference type="SUPFAM" id="SSF52374">
    <property type="entry name" value="Nucleotidylyl transferase"/>
    <property type="match status" value="1"/>
</dbReference>
<dbReference type="SUPFAM" id="SSF50677">
    <property type="entry name" value="ValRS/IleRS/LeuRS editing domain"/>
    <property type="match status" value="1"/>
</dbReference>
<dbReference type="PROSITE" id="PS00178">
    <property type="entry name" value="AA_TRNA_LIGASE_I"/>
    <property type="match status" value="1"/>
</dbReference>
<sequence length="944" mass="105642">MSDYKSTLNLPETGFPMRGDLAKREPGMLARWTDDDLYGIIRAAKKGKKTFILHDGPPYANGSIHIGHSVNKILKDIIVKSKGLSGFDSPYVPGWDCHGLPIELKVEQEFGKPGEKFTAAEFRAKCREYAATQVDGQRKDFIRLGVLGDWSHPYLTMDFKTEANIIRALGRIIKNGHLHKGAKPVHWCVDCRSALAEAEVEYYDKTSPSIDVAFRAVDQDAVKAKFGLPGVSGPVSLVIWTTTPWTLPANRAISLAPDFDYALVQIDGQAVILAKDLVESVMQRIGAAEYTILGTVKGAELELLRFTHPFMGFDVPAILGDHVTLDAGTGAVHTAPGHGPDDYVIGQKYGLETANPVGPDGAYLPGTYPTLDGVNVFKANDIVIELLKEKGALLHVEKMQHSYPCCWRHKTPIIFRATPQWFVSMDKEGLRQQSLKEIKGVQWIPDWGQARIESMVANRPDWCISRQRTWGVPMSLFVHKETQELLPIERTLAAMEEVAKRVEVDGIQAWWDLDPKEILGEDADQYEKVPDTLDVWFDSGSTSYSVVDARPEFAGHAADMYLEGSDQHRGWFMSSLMISVAMKGKAPYRQVLTHGFTVDGQGRKMSKSIGNTVSPQDVMNKLGADILRLWVASTDYTGEMAVSDEILKRAADSYRRIRNTARFLLANLNGFNPATDMVKPEEMVVLDRWAVGCAKTAQQEILKAYEAYDFHEVVQRLMRFCSVEMGSFYLDIIKDRQYTAKADSVARRSCQTALYHIAEALVRWMAPIMSFTADEIWGYLPGEREKYVFTGEWYDGLFGLEENEEFNDAFWDDVRYIKDQVNKELENQKANGIKSNLEAKVTLKYADDANGTIKKLKLLGEEVRFIFITSQFVISEQAGGIDDENIQYNAGNTTVQAVVTRAEGDKCPRCWHYTTDVGKVAEHADICGRCVSNIAGNGEQRKFA</sequence>
<accession>Q57TL5</accession>